<sequence>MSALEKSMHLGRLPSRPPLPGSGGSQSGAKMRMGPGRKRDFTPVPWSQYFESMEDVEVENETGKDTFRVYKSGSEGPVLLLLHGGGHSALSWAVFTAAIISRVQCRIVALDLRSHGETKVKNSEDLSAETMAKDVGNVVEAMYGDLPPPVMLIGHSMGGAIAVHTAAANLVPSLLGLCMIDVVEGTAMDALNSMQNFLRGRPKTFKSLENAIEWSVKSGQIRNLESARVSMVGQVKQCEGITSPESSKSIVEGIIEEEEEDEEGSESVNKRKKEDDMETKKDHPYTWRIELAKTEKYWDGWFRGLSNLFLSCPIPKLLLLAGVDRLDKDLTIGQMQGKFQMQVLPQCGHAVHEDAPDKVAEAVATFLIRHRFAEPIGGFQCVFPGC</sequence>
<gene>
    <name type="primary">Ppme1</name>
    <name type="synonym">Pme1</name>
</gene>
<organism>
    <name type="scientific">Rattus norvegicus</name>
    <name type="common">Rat</name>
    <dbReference type="NCBI Taxonomy" id="10116"/>
    <lineage>
        <taxon>Eukaryota</taxon>
        <taxon>Metazoa</taxon>
        <taxon>Chordata</taxon>
        <taxon>Craniata</taxon>
        <taxon>Vertebrata</taxon>
        <taxon>Euteleostomi</taxon>
        <taxon>Mammalia</taxon>
        <taxon>Eutheria</taxon>
        <taxon>Euarchontoglires</taxon>
        <taxon>Glires</taxon>
        <taxon>Rodentia</taxon>
        <taxon>Myomorpha</taxon>
        <taxon>Muroidea</taxon>
        <taxon>Muridae</taxon>
        <taxon>Murinae</taxon>
        <taxon>Rattus</taxon>
    </lineage>
</organism>
<protein>
    <recommendedName>
        <fullName>Protein phosphatase methylesterase 1</fullName>
        <shortName>PME-1</shortName>
        <ecNumber>3.1.1.89</ecNumber>
    </recommendedName>
</protein>
<proteinExistence type="evidence at protein level"/>
<keyword id="KW-0378">Hydrolase</keyword>
<keyword id="KW-0488">Methylation</keyword>
<keyword id="KW-0597">Phosphoprotein</keyword>
<keyword id="KW-1185">Reference proteome</keyword>
<keyword id="KW-0719">Serine esterase</keyword>
<accession>Q4FZT2</accession>
<feature type="chain" id="PRO_0000413635" description="Protein phosphatase methylesterase 1">
    <location>
        <begin position="1"/>
        <end position="386"/>
    </location>
</feature>
<feature type="region of interest" description="Disordered" evidence="4">
    <location>
        <begin position="1"/>
        <end position="38"/>
    </location>
</feature>
<feature type="region of interest" description="Disordered" evidence="4">
    <location>
        <begin position="255"/>
        <end position="280"/>
    </location>
</feature>
<feature type="compositionally biased region" description="Acidic residues" evidence="4">
    <location>
        <begin position="255"/>
        <end position="265"/>
    </location>
</feature>
<feature type="compositionally biased region" description="Basic and acidic residues" evidence="4">
    <location>
        <begin position="268"/>
        <end position="280"/>
    </location>
</feature>
<feature type="active site" evidence="1">
    <location>
        <position position="156"/>
    </location>
</feature>
<feature type="active site" evidence="1">
    <location>
        <position position="349"/>
    </location>
</feature>
<feature type="modified residue" description="Phosphoserine" evidence="3">
    <location>
        <position position="15"/>
    </location>
</feature>
<feature type="modified residue" description="Asymmetric dimethylarginine; alternate" evidence="2">
    <location>
        <position position="16"/>
    </location>
</feature>
<feature type="modified residue" description="Omega-N-methylarginine; alternate" evidence="3">
    <location>
        <position position="16"/>
    </location>
</feature>
<name>PPME1_RAT</name>
<evidence type="ECO:0000250" key="1"/>
<evidence type="ECO:0000250" key="2">
    <source>
        <dbReference type="UniProtKB" id="Q8BVQ5"/>
    </source>
</evidence>
<evidence type="ECO:0000250" key="3">
    <source>
        <dbReference type="UniProtKB" id="Q9Y570"/>
    </source>
</evidence>
<evidence type="ECO:0000256" key="4">
    <source>
        <dbReference type="SAM" id="MobiDB-lite"/>
    </source>
</evidence>
<evidence type="ECO:0000269" key="5">
    <source>
    </source>
</evidence>
<evidence type="ECO:0000305" key="6"/>
<comment type="function">
    <text evidence="1 5">Demethylates proteins that have been reversibly carboxymethylated. Demethylates PPP2CB (in vitro) and PPP2CA. Binding to PPP2CA displaces the manganese ion and inactivates the enzyme (By similarity).</text>
</comment>
<comment type="catalytic activity">
    <reaction>
        <text>[phosphatase 2A protein]-C-terminal L-leucine methyl ester + H2O = [phosphatase 2A protein]-C-terminal L-leucine + methanol + H(+)</text>
        <dbReference type="Rhea" id="RHEA:48548"/>
        <dbReference type="Rhea" id="RHEA-COMP:12134"/>
        <dbReference type="Rhea" id="RHEA-COMP:12135"/>
        <dbReference type="ChEBI" id="CHEBI:15377"/>
        <dbReference type="ChEBI" id="CHEBI:15378"/>
        <dbReference type="ChEBI" id="CHEBI:17790"/>
        <dbReference type="ChEBI" id="CHEBI:90516"/>
        <dbReference type="ChEBI" id="CHEBI:90517"/>
        <dbReference type="EC" id="3.1.1.89"/>
    </reaction>
</comment>
<comment type="subunit">
    <text evidence="1">Binds PPP2CA and PPP2CB.</text>
</comment>
<comment type="PTM">
    <text evidence="5">Phosphorylated by SIK1 following increases in intracellular sodium, leading to dissociation from the protein phosphatase 2A (PP2A) complex and subsequent dephosphorylation of sodium/potassium-transporting ATPase ATP1A1.</text>
</comment>
<comment type="similarity">
    <text evidence="6">Belongs to the AB hydrolase superfamily.</text>
</comment>
<reference key="1">
    <citation type="journal article" date="2004" name="Nature">
        <title>Genome sequence of the Brown Norway rat yields insights into mammalian evolution.</title>
        <authorList>
            <person name="Gibbs R.A."/>
            <person name="Weinstock G.M."/>
            <person name="Metzker M.L."/>
            <person name="Muzny D.M."/>
            <person name="Sodergren E.J."/>
            <person name="Scherer S."/>
            <person name="Scott G."/>
            <person name="Steffen D."/>
            <person name="Worley K.C."/>
            <person name="Burch P.E."/>
            <person name="Okwuonu G."/>
            <person name="Hines S."/>
            <person name="Lewis L."/>
            <person name="Deramo C."/>
            <person name="Delgado O."/>
            <person name="Dugan-Rocha S."/>
            <person name="Miner G."/>
            <person name="Morgan M."/>
            <person name="Hawes A."/>
            <person name="Gill R."/>
            <person name="Holt R.A."/>
            <person name="Adams M.D."/>
            <person name="Amanatides P.G."/>
            <person name="Baden-Tillson H."/>
            <person name="Barnstead M."/>
            <person name="Chin S."/>
            <person name="Evans C.A."/>
            <person name="Ferriera S."/>
            <person name="Fosler C."/>
            <person name="Glodek A."/>
            <person name="Gu Z."/>
            <person name="Jennings D."/>
            <person name="Kraft C.L."/>
            <person name="Nguyen T."/>
            <person name="Pfannkoch C.M."/>
            <person name="Sitter C."/>
            <person name="Sutton G.G."/>
            <person name="Venter J.C."/>
            <person name="Woodage T."/>
            <person name="Smith D."/>
            <person name="Lee H.-M."/>
            <person name="Gustafson E."/>
            <person name="Cahill P."/>
            <person name="Kana A."/>
            <person name="Doucette-Stamm L."/>
            <person name="Weinstock K."/>
            <person name="Fechtel K."/>
            <person name="Weiss R.B."/>
            <person name="Dunn D.M."/>
            <person name="Green E.D."/>
            <person name="Blakesley R.W."/>
            <person name="Bouffard G.G."/>
            <person name="De Jong P.J."/>
            <person name="Osoegawa K."/>
            <person name="Zhu B."/>
            <person name="Marra M."/>
            <person name="Schein J."/>
            <person name="Bosdet I."/>
            <person name="Fjell C."/>
            <person name="Jones S."/>
            <person name="Krzywinski M."/>
            <person name="Mathewson C."/>
            <person name="Siddiqui A."/>
            <person name="Wye N."/>
            <person name="McPherson J."/>
            <person name="Zhao S."/>
            <person name="Fraser C.M."/>
            <person name="Shetty J."/>
            <person name="Shatsman S."/>
            <person name="Geer K."/>
            <person name="Chen Y."/>
            <person name="Abramzon S."/>
            <person name="Nierman W.C."/>
            <person name="Havlak P.H."/>
            <person name="Chen R."/>
            <person name="Durbin K.J."/>
            <person name="Egan A."/>
            <person name="Ren Y."/>
            <person name="Song X.-Z."/>
            <person name="Li B."/>
            <person name="Liu Y."/>
            <person name="Qin X."/>
            <person name="Cawley S."/>
            <person name="Cooney A.J."/>
            <person name="D'Souza L.M."/>
            <person name="Martin K."/>
            <person name="Wu J.Q."/>
            <person name="Gonzalez-Garay M.L."/>
            <person name="Jackson A.R."/>
            <person name="Kalafus K.J."/>
            <person name="McLeod M.P."/>
            <person name="Milosavljevic A."/>
            <person name="Virk D."/>
            <person name="Volkov A."/>
            <person name="Wheeler D.A."/>
            <person name="Zhang Z."/>
            <person name="Bailey J.A."/>
            <person name="Eichler E.E."/>
            <person name="Tuzun E."/>
            <person name="Birney E."/>
            <person name="Mongin E."/>
            <person name="Ureta-Vidal A."/>
            <person name="Woodwark C."/>
            <person name="Zdobnov E."/>
            <person name="Bork P."/>
            <person name="Suyama M."/>
            <person name="Torrents D."/>
            <person name="Alexandersson M."/>
            <person name="Trask B.J."/>
            <person name="Young J.M."/>
            <person name="Huang H."/>
            <person name="Wang H."/>
            <person name="Xing H."/>
            <person name="Daniels S."/>
            <person name="Gietzen D."/>
            <person name="Schmidt J."/>
            <person name="Stevens K."/>
            <person name="Vitt U."/>
            <person name="Wingrove J."/>
            <person name="Camara F."/>
            <person name="Mar Alba M."/>
            <person name="Abril J.F."/>
            <person name="Guigo R."/>
            <person name="Smit A."/>
            <person name="Dubchak I."/>
            <person name="Rubin E.M."/>
            <person name="Couronne O."/>
            <person name="Poliakov A."/>
            <person name="Huebner N."/>
            <person name="Ganten D."/>
            <person name="Goesele C."/>
            <person name="Hummel O."/>
            <person name="Kreitler T."/>
            <person name="Lee Y.-A."/>
            <person name="Monti J."/>
            <person name="Schulz H."/>
            <person name="Zimdahl H."/>
            <person name="Himmelbauer H."/>
            <person name="Lehrach H."/>
            <person name="Jacob H.J."/>
            <person name="Bromberg S."/>
            <person name="Gullings-Handley J."/>
            <person name="Jensen-Seaman M.I."/>
            <person name="Kwitek A.E."/>
            <person name="Lazar J."/>
            <person name="Pasko D."/>
            <person name="Tonellato P.J."/>
            <person name="Twigger S."/>
            <person name="Ponting C.P."/>
            <person name="Duarte J.M."/>
            <person name="Rice S."/>
            <person name="Goodstadt L."/>
            <person name="Beatson S.A."/>
            <person name="Emes R.D."/>
            <person name="Winter E.E."/>
            <person name="Webber C."/>
            <person name="Brandt P."/>
            <person name="Nyakatura G."/>
            <person name="Adetobi M."/>
            <person name="Chiaromonte F."/>
            <person name="Elnitski L."/>
            <person name="Eswara P."/>
            <person name="Hardison R.C."/>
            <person name="Hou M."/>
            <person name="Kolbe D."/>
            <person name="Makova K."/>
            <person name="Miller W."/>
            <person name="Nekrutenko A."/>
            <person name="Riemer C."/>
            <person name="Schwartz S."/>
            <person name="Taylor J."/>
            <person name="Yang S."/>
            <person name="Zhang Y."/>
            <person name="Lindpaintner K."/>
            <person name="Andrews T.D."/>
            <person name="Caccamo M."/>
            <person name="Clamp M."/>
            <person name="Clarke L."/>
            <person name="Curwen V."/>
            <person name="Durbin R.M."/>
            <person name="Eyras E."/>
            <person name="Searle S.M."/>
            <person name="Cooper G.M."/>
            <person name="Batzoglou S."/>
            <person name="Brudno M."/>
            <person name="Sidow A."/>
            <person name="Stone E.A."/>
            <person name="Payseur B.A."/>
            <person name="Bourque G."/>
            <person name="Lopez-Otin C."/>
            <person name="Puente X.S."/>
            <person name="Chakrabarti K."/>
            <person name="Chatterji S."/>
            <person name="Dewey C."/>
            <person name="Pachter L."/>
            <person name="Bray N."/>
            <person name="Yap V.B."/>
            <person name="Caspi A."/>
            <person name="Tesler G."/>
            <person name="Pevzner P.A."/>
            <person name="Haussler D."/>
            <person name="Roskin K.M."/>
            <person name="Baertsch R."/>
            <person name="Clawson H."/>
            <person name="Furey T.S."/>
            <person name="Hinrichs A.S."/>
            <person name="Karolchik D."/>
            <person name="Kent W.J."/>
            <person name="Rosenbloom K.R."/>
            <person name="Trumbower H."/>
            <person name="Weirauch M."/>
            <person name="Cooper D.N."/>
            <person name="Stenson P.D."/>
            <person name="Ma B."/>
            <person name="Brent M."/>
            <person name="Arumugam M."/>
            <person name="Shteynberg D."/>
            <person name="Copley R.R."/>
            <person name="Taylor M.S."/>
            <person name="Riethman H."/>
            <person name="Mudunuri U."/>
            <person name="Peterson J."/>
            <person name="Guyer M."/>
            <person name="Felsenfeld A."/>
            <person name="Old S."/>
            <person name="Mockrin S."/>
            <person name="Collins F.S."/>
        </authorList>
    </citation>
    <scope>NUCLEOTIDE SEQUENCE [LARGE SCALE GENOMIC DNA]</scope>
    <source>
        <strain>Brown Norway</strain>
    </source>
</reference>
<reference key="2">
    <citation type="journal article" date="2004" name="Genome Res.">
        <title>The status, quality, and expansion of the NIH full-length cDNA project: the Mammalian Gene Collection (MGC).</title>
        <authorList>
            <consortium name="The MGC Project Team"/>
        </authorList>
    </citation>
    <scope>NUCLEOTIDE SEQUENCE [LARGE SCALE MRNA] OF 290-386</scope>
    <source>
        <tissue>Thymus</tissue>
    </source>
</reference>
<reference key="3">
    <citation type="journal article" date="2007" name="Proc. Natl. Acad. Sci. U.S.A.">
        <title>SIK1 is part of a cell sodium-sensing network that regulates active sodium transport through a calcium-dependent process.</title>
        <authorList>
            <person name="Sjostrom M."/>
            <person name="Stenstrom K."/>
            <person name="Eneling K."/>
            <person name="Zwiller J."/>
            <person name="Katz A.I."/>
            <person name="Takemori H."/>
            <person name="Bertorello A.M."/>
        </authorList>
    </citation>
    <scope>PHOSPHORYLATION BY SIK1</scope>
    <scope>FUNCTION</scope>
</reference>
<dbReference type="EC" id="3.1.1.89"/>
<dbReference type="EMBL" id="BC099160">
    <property type="protein sequence ID" value="AAH99160.1"/>
    <property type="molecule type" value="mRNA"/>
</dbReference>
<dbReference type="RefSeq" id="NP_001178767.1">
    <property type="nucleotide sequence ID" value="NM_001191838.1"/>
</dbReference>
<dbReference type="RefSeq" id="XP_063123246.1">
    <property type="nucleotide sequence ID" value="XM_063267176.1"/>
</dbReference>
<dbReference type="SMR" id="Q4FZT2"/>
<dbReference type="FunCoup" id="Q4FZT2">
    <property type="interactions" value="4314"/>
</dbReference>
<dbReference type="STRING" id="10116.ENSRNOP00000023649"/>
<dbReference type="iPTMnet" id="Q4FZT2"/>
<dbReference type="PhosphoSitePlus" id="Q4FZT2"/>
<dbReference type="jPOST" id="Q4FZT2"/>
<dbReference type="PaxDb" id="10116-ENSRNOP00000023649"/>
<dbReference type="Ensembl" id="ENSRNOT00000023648.8">
    <property type="protein sequence ID" value="ENSRNOP00000023649.7"/>
    <property type="gene ID" value="ENSRNOG00000017227.8"/>
</dbReference>
<dbReference type="GeneID" id="361613"/>
<dbReference type="KEGG" id="rno:361613"/>
<dbReference type="UCSC" id="RGD:1309683">
    <property type="organism name" value="rat"/>
</dbReference>
<dbReference type="AGR" id="RGD:1309683"/>
<dbReference type="CTD" id="51400"/>
<dbReference type="RGD" id="1309683">
    <property type="gene designation" value="Ppme1"/>
</dbReference>
<dbReference type="eggNOG" id="KOG2564">
    <property type="taxonomic scope" value="Eukaryota"/>
</dbReference>
<dbReference type="GeneTree" id="ENSGT00390000004396"/>
<dbReference type="HOGENOM" id="CLU_024818_0_1_1"/>
<dbReference type="InParanoid" id="Q4FZT2"/>
<dbReference type="OMA" id="VMVCHHG"/>
<dbReference type="OrthoDB" id="194865at2759"/>
<dbReference type="TreeFam" id="TF314697"/>
<dbReference type="Reactome" id="R-RNO-69273">
    <property type="pathway name" value="Cyclin A/B1/B2 associated events during G2/M transition"/>
</dbReference>
<dbReference type="PRO" id="PR:Q4FZT2"/>
<dbReference type="Proteomes" id="UP000002494">
    <property type="component" value="Chromosome 1"/>
</dbReference>
<dbReference type="Bgee" id="ENSRNOG00000017227">
    <property type="expression patterns" value="Expressed in frontal cortex and 20 other cell types or tissues"/>
</dbReference>
<dbReference type="GO" id="GO:0106222">
    <property type="term" value="F:lncRNA binding"/>
    <property type="evidence" value="ECO:0000266"/>
    <property type="project" value="RGD"/>
</dbReference>
<dbReference type="GO" id="GO:0051722">
    <property type="term" value="F:protein C-terminal methylesterase activity"/>
    <property type="evidence" value="ECO:0000266"/>
    <property type="project" value="RGD"/>
</dbReference>
<dbReference type="GO" id="GO:0019901">
    <property type="term" value="F:protein kinase binding"/>
    <property type="evidence" value="ECO:0000353"/>
    <property type="project" value="UniProtKB"/>
</dbReference>
<dbReference type="GO" id="GO:0051721">
    <property type="term" value="F:protein phosphatase 2A binding"/>
    <property type="evidence" value="ECO:0000266"/>
    <property type="project" value="RGD"/>
</dbReference>
<dbReference type="GO" id="GO:0019903">
    <property type="term" value="F:protein phosphatase binding"/>
    <property type="evidence" value="ECO:0000266"/>
    <property type="project" value="RGD"/>
</dbReference>
<dbReference type="GO" id="GO:0004864">
    <property type="term" value="F:protein phosphatase inhibitor activity"/>
    <property type="evidence" value="ECO:0007669"/>
    <property type="project" value="Ensembl"/>
</dbReference>
<dbReference type="GO" id="GO:0019888">
    <property type="term" value="F:protein phosphatase regulator activity"/>
    <property type="evidence" value="ECO:0000304"/>
    <property type="project" value="UniProtKB"/>
</dbReference>
<dbReference type="GO" id="GO:0002028">
    <property type="term" value="P:regulation of sodium ion transport"/>
    <property type="evidence" value="ECO:0000304"/>
    <property type="project" value="UniProtKB"/>
</dbReference>
<dbReference type="Gene3D" id="3.40.50.1820">
    <property type="entry name" value="alpha/beta hydrolase"/>
    <property type="match status" value="1"/>
</dbReference>
<dbReference type="InterPro" id="IPR000073">
    <property type="entry name" value="AB_hydrolase_1"/>
</dbReference>
<dbReference type="InterPro" id="IPR029058">
    <property type="entry name" value="AB_hydrolase_fold"/>
</dbReference>
<dbReference type="InterPro" id="IPR016812">
    <property type="entry name" value="PPase_methylesterase_euk"/>
</dbReference>
<dbReference type="PANTHER" id="PTHR14189:SF0">
    <property type="entry name" value="PROTEIN PHOSPHATASE METHYLESTERASE 1"/>
    <property type="match status" value="1"/>
</dbReference>
<dbReference type="PANTHER" id="PTHR14189">
    <property type="entry name" value="PROTEIN PHOSPHATASE METHYLESTERASE-1 RELATED"/>
    <property type="match status" value="1"/>
</dbReference>
<dbReference type="Pfam" id="PF12697">
    <property type="entry name" value="Abhydrolase_6"/>
    <property type="match status" value="1"/>
</dbReference>
<dbReference type="PIRSF" id="PIRSF022950">
    <property type="entry name" value="PPase_methylesterase_euk"/>
    <property type="match status" value="1"/>
</dbReference>
<dbReference type="SUPFAM" id="SSF53474">
    <property type="entry name" value="alpha/beta-Hydrolases"/>
    <property type="match status" value="1"/>
</dbReference>